<accession>P9WGD8</accession>
<accession>L0TDS3</accession>
<accession>P66842</accession>
<accession>Q10969</accession>
<organism>
    <name type="scientific">Mycobacterium tuberculosis (strain CDC 1551 / Oshkosh)</name>
    <dbReference type="NCBI Taxonomy" id="83331"/>
    <lineage>
        <taxon>Bacteria</taxon>
        <taxon>Bacillati</taxon>
        <taxon>Actinomycetota</taxon>
        <taxon>Actinomycetes</taxon>
        <taxon>Mycobacteriales</taxon>
        <taxon>Mycobacteriaceae</taxon>
        <taxon>Mycobacterium</taxon>
        <taxon>Mycobacterium tuberculosis complex</taxon>
    </lineage>
</organism>
<name>FTSY_MYCTO</name>
<protein>
    <recommendedName>
        <fullName evidence="1">Signal recognition particle receptor FtsY</fullName>
        <shortName evidence="1">SRP receptor</shortName>
        <ecNumber evidence="1">3.6.5.4</ecNumber>
    </recommendedName>
</protein>
<evidence type="ECO:0000255" key="1">
    <source>
        <dbReference type="HAMAP-Rule" id="MF_00920"/>
    </source>
</evidence>
<evidence type="ECO:0000256" key="2">
    <source>
        <dbReference type="SAM" id="MobiDB-lite"/>
    </source>
</evidence>
<comment type="function">
    <text evidence="1">Involved in targeting and insertion of nascent membrane proteins into the cytoplasmic membrane. Acts as a receptor for the complex formed by the signal recognition particle (SRP) and the ribosome-nascent chain (RNC).</text>
</comment>
<comment type="catalytic activity">
    <reaction evidence="1">
        <text>GTP + H2O = GDP + phosphate + H(+)</text>
        <dbReference type="Rhea" id="RHEA:19669"/>
        <dbReference type="ChEBI" id="CHEBI:15377"/>
        <dbReference type="ChEBI" id="CHEBI:15378"/>
        <dbReference type="ChEBI" id="CHEBI:37565"/>
        <dbReference type="ChEBI" id="CHEBI:43474"/>
        <dbReference type="ChEBI" id="CHEBI:58189"/>
        <dbReference type="EC" id="3.6.5.4"/>
    </reaction>
</comment>
<comment type="subunit">
    <text evidence="1">Part of the signal recognition particle protein translocation system, which is composed of SRP and FtsY.</text>
</comment>
<comment type="subcellular location">
    <subcellularLocation>
        <location>Cell membrane</location>
        <topology>Peripheral membrane protein</topology>
        <orientation>Cytoplasmic side</orientation>
    </subcellularLocation>
    <subcellularLocation>
        <location evidence="1">Cytoplasm</location>
    </subcellularLocation>
</comment>
<comment type="similarity">
    <text evidence="1">Belongs to the GTP-binding SRP family. FtsY subfamily.</text>
</comment>
<proteinExistence type="inferred from homology"/>
<dbReference type="EC" id="3.6.5.4" evidence="1"/>
<dbReference type="EMBL" id="AE000516">
    <property type="protein sequence ID" value="AAK47316.1"/>
    <property type="molecule type" value="Genomic_DNA"/>
</dbReference>
<dbReference type="PIR" id="A70748">
    <property type="entry name" value="A70748"/>
</dbReference>
<dbReference type="RefSeq" id="WP_003899541.1">
    <property type="nucleotide sequence ID" value="NZ_KK341227.1"/>
</dbReference>
<dbReference type="SMR" id="P9WGD8"/>
<dbReference type="KEGG" id="mtc:MT2989"/>
<dbReference type="PATRIC" id="fig|83331.31.peg.3230"/>
<dbReference type="HOGENOM" id="CLU_009301_1_2_11"/>
<dbReference type="Proteomes" id="UP000001020">
    <property type="component" value="Chromosome"/>
</dbReference>
<dbReference type="GO" id="GO:0005737">
    <property type="term" value="C:cytoplasm"/>
    <property type="evidence" value="ECO:0007669"/>
    <property type="project" value="UniProtKB-SubCell"/>
</dbReference>
<dbReference type="GO" id="GO:0005886">
    <property type="term" value="C:plasma membrane"/>
    <property type="evidence" value="ECO:0007669"/>
    <property type="project" value="UniProtKB-SubCell"/>
</dbReference>
<dbReference type="GO" id="GO:0016887">
    <property type="term" value="F:ATP hydrolysis activity"/>
    <property type="evidence" value="ECO:0007669"/>
    <property type="project" value="InterPro"/>
</dbReference>
<dbReference type="GO" id="GO:0005525">
    <property type="term" value="F:GTP binding"/>
    <property type="evidence" value="ECO:0007669"/>
    <property type="project" value="UniProtKB-UniRule"/>
</dbReference>
<dbReference type="GO" id="GO:0003924">
    <property type="term" value="F:GTPase activity"/>
    <property type="evidence" value="ECO:0007669"/>
    <property type="project" value="UniProtKB-UniRule"/>
</dbReference>
<dbReference type="GO" id="GO:0005047">
    <property type="term" value="F:signal recognition particle binding"/>
    <property type="evidence" value="ECO:0007669"/>
    <property type="project" value="TreeGrafter"/>
</dbReference>
<dbReference type="GO" id="GO:0006614">
    <property type="term" value="P:SRP-dependent cotranslational protein targeting to membrane"/>
    <property type="evidence" value="ECO:0007669"/>
    <property type="project" value="InterPro"/>
</dbReference>
<dbReference type="CDD" id="cd17874">
    <property type="entry name" value="FtsY"/>
    <property type="match status" value="1"/>
</dbReference>
<dbReference type="FunFam" id="1.20.120.140:FF:000002">
    <property type="entry name" value="Signal recognition particle receptor FtsY"/>
    <property type="match status" value="1"/>
</dbReference>
<dbReference type="FunFam" id="3.40.50.300:FF:000053">
    <property type="entry name" value="Signal recognition particle receptor FtsY"/>
    <property type="match status" value="1"/>
</dbReference>
<dbReference type="Gene3D" id="3.40.50.300">
    <property type="entry name" value="P-loop containing nucleotide triphosphate hydrolases"/>
    <property type="match status" value="1"/>
</dbReference>
<dbReference type="Gene3D" id="1.20.120.140">
    <property type="entry name" value="Signal recognition particle SRP54, nucleotide-binding domain"/>
    <property type="match status" value="1"/>
</dbReference>
<dbReference type="HAMAP" id="MF_00920">
    <property type="entry name" value="FtsY"/>
    <property type="match status" value="1"/>
</dbReference>
<dbReference type="InterPro" id="IPR003593">
    <property type="entry name" value="AAA+_ATPase"/>
</dbReference>
<dbReference type="InterPro" id="IPR027417">
    <property type="entry name" value="P-loop_NTPase"/>
</dbReference>
<dbReference type="InterPro" id="IPR013822">
    <property type="entry name" value="Signal_recog_particl_SRP54_hlx"/>
</dbReference>
<dbReference type="InterPro" id="IPR004390">
    <property type="entry name" value="SR_rcpt_FtsY"/>
</dbReference>
<dbReference type="InterPro" id="IPR036225">
    <property type="entry name" value="SRP/SRP_N"/>
</dbReference>
<dbReference type="InterPro" id="IPR000897">
    <property type="entry name" value="SRP54_GTPase_dom"/>
</dbReference>
<dbReference type="InterPro" id="IPR042101">
    <property type="entry name" value="SRP54_N_sf"/>
</dbReference>
<dbReference type="NCBIfam" id="TIGR00064">
    <property type="entry name" value="ftsY"/>
    <property type="match status" value="1"/>
</dbReference>
<dbReference type="PANTHER" id="PTHR43134">
    <property type="entry name" value="SIGNAL RECOGNITION PARTICLE RECEPTOR SUBUNIT ALPHA"/>
    <property type="match status" value="1"/>
</dbReference>
<dbReference type="PANTHER" id="PTHR43134:SF1">
    <property type="entry name" value="SIGNAL RECOGNITION PARTICLE RECEPTOR SUBUNIT ALPHA"/>
    <property type="match status" value="1"/>
</dbReference>
<dbReference type="Pfam" id="PF00448">
    <property type="entry name" value="SRP54"/>
    <property type="match status" value="1"/>
</dbReference>
<dbReference type="Pfam" id="PF02881">
    <property type="entry name" value="SRP54_N"/>
    <property type="match status" value="1"/>
</dbReference>
<dbReference type="SMART" id="SM00382">
    <property type="entry name" value="AAA"/>
    <property type="match status" value="1"/>
</dbReference>
<dbReference type="SMART" id="SM00962">
    <property type="entry name" value="SRP54"/>
    <property type="match status" value="1"/>
</dbReference>
<dbReference type="SMART" id="SM00963">
    <property type="entry name" value="SRP54_N"/>
    <property type="match status" value="1"/>
</dbReference>
<dbReference type="SUPFAM" id="SSF47364">
    <property type="entry name" value="Domain of the SRP/SRP receptor G-proteins"/>
    <property type="match status" value="1"/>
</dbReference>
<dbReference type="SUPFAM" id="SSF52540">
    <property type="entry name" value="P-loop containing nucleoside triphosphate hydrolases"/>
    <property type="match status" value="1"/>
</dbReference>
<dbReference type="PROSITE" id="PS00300">
    <property type="entry name" value="SRP54"/>
    <property type="match status" value="1"/>
</dbReference>
<reference key="1">
    <citation type="journal article" date="2002" name="J. Bacteriol.">
        <title>Whole-genome comparison of Mycobacterium tuberculosis clinical and laboratory strains.</title>
        <authorList>
            <person name="Fleischmann R.D."/>
            <person name="Alland D."/>
            <person name="Eisen J.A."/>
            <person name="Carpenter L."/>
            <person name="White O."/>
            <person name="Peterson J.D."/>
            <person name="DeBoy R.T."/>
            <person name="Dodson R.J."/>
            <person name="Gwinn M.L."/>
            <person name="Haft D.H."/>
            <person name="Hickey E.K."/>
            <person name="Kolonay J.F."/>
            <person name="Nelson W.C."/>
            <person name="Umayam L.A."/>
            <person name="Ermolaeva M.D."/>
            <person name="Salzberg S.L."/>
            <person name="Delcher A."/>
            <person name="Utterback T.R."/>
            <person name="Weidman J.F."/>
            <person name="Khouri H.M."/>
            <person name="Gill J."/>
            <person name="Mikula A."/>
            <person name="Bishai W."/>
            <person name="Jacobs W.R. Jr."/>
            <person name="Venter J.C."/>
            <person name="Fraser C.M."/>
        </authorList>
    </citation>
    <scope>NUCLEOTIDE SEQUENCE [LARGE SCALE GENOMIC DNA]</scope>
    <source>
        <strain>CDC 1551 / Oshkosh</strain>
    </source>
</reference>
<keyword id="KW-1003">Cell membrane</keyword>
<keyword id="KW-0963">Cytoplasm</keyword>
<keyword id="KW-0342">GTP-binding</keyword>
<keyword id="KW-0378">Hydrolase</keyword>
<keyword id="KW-0472">Membrane</keyword>
<keyword id="KW-0547">Nucleotide-binding</keyword>
<keyword id="KW-0675">Receptor</keyword>
<keyword id="KW-1185">Reference proteome</keyword>
<feature type="chain" id="PRO_0000428379" description="Signal recognition particle receptor FtsY">
    <location>
        <begin position="1"/>
        <end position="422"/>
    </location>
</feature>
<feature type="region of interest" description="Disordered" evidence="2">
    <location>
        <begin position="39"/>
        <end position="86"/>
    </location>
</feature>
<feature type="compositionally biased region" description="Polar residues" evidence="2">
    <location>
        <begin position="50"/>
        <end position="66"/>
    </location>
</feature>
<feature type="binding site" evidence="1">
    <location>
        <begin position="230"/>
        <end position="237"/>
    </location>
    <ligand>
        <name>GTP</name>
        <dbReference type="ChEBI" id="CHEBI:37565"/>
    </ligand>
</feature>
<feature type="binding site" evidence="1">
    <location>
        <begin position="312"/>
        <end position="316"/>
    </location>
    <ligand>
        <name>GTP</name>
        <dbReference type="ChEBI" id="CHEBI:37565"/>
    </ligand>
</feature>
<feature type="binding site" evidence="1">
    <location>
        <begin position="374"/>
        <end position="377"/>
    </location>
    <ligand>
        <name>GTP</name>
        <dbReference type="ChEBI" id="CHEBI:37565"/>
    </ligand>
</feature>
<sequence length="422" mass="44031">MWEGLWIATAVIAALVVIAALTLGLVLYRRRRISLSPRPERGVVDRSGGYTASSGITFSQTPTTQPAERIDTSGLPAVGDDATVPRDAPKRTIADVHLPEFEPEPQAPEVPEADAIAPPEGRLERLRGRLARSQNALGRGLLGLIGGGDLDEDSWQDVEDTLLVADLGPAATASVVSQLRSRLASGNVRTEADARAVLRDVLINELQPGMDRSIRALPHAGHPSVLLVVGVNGTGKTTTVGKLARVLVADGRRVVLGAADTFRAAAADQLQTWAARVGAAVVRGPEGADPASVAFDAVDKGIAAGADVVLIDTAGRLHTKVGLMDELDKVKRVVTRRASVDEVLLVLDATIGQNGLAQARVFAEVVDISGAVLTKLDGTAKGGIVFRVQQELGVPVKLVGLGEGPDDLAPFEPAAFVDALLG</sequence>
<gene>
    <name evidence="1" type="primary">ftsY</name>
    <name type="ordered locus">MT2989</name>
</gene>